<keyword id="KW-0067">ATP-binding</keyword>
<keyword id="KW-0963">Cytoplasm</keyword>
<keyword id="KW-1015">Disulfide bond</keyword>
<keyword id="KW-0547">Nucleotide-binding</keyword>
<keyword id="KW-0694">RNA-binding</keyword>
<keyword id="KW-0808">Transferase</keyword>
<keyword id="KW-0819">tRNA processing</keyword>
<keyword id="KW-0820">tRNA-binding</keyword>
<sequence length="365" mass="40194">MINLGDKHSTIVVAMSGGVDSSAVAAMLHEQGHNVIGITLQLYDHGMAVGKKNACCAGQDIYDAKMVANKLGIPHYVLDYESKFKESVIDNFVDSYLQGETPLPCVQCNNSVKFRDLIKTARELGASQLATGHYVRKVSGDNGVELHTGLDPAKDQSYFLFTTTKEQLEYLSFPLGWFTKDETRKLASKFGLEVAYKPDSQDICFVPDGNYKSVINTIRPNASESGKIIHINGFALGEHSGIINYTIGQRRGLGIAYNEPLYVVKIDPKDNIVYVGPEAALHVQEFIIKDVNWLADEIKDNKKLEVAVKIRSTRPPRLAAISKLGDDKMKIRFLSAEKAVAPGQACVIYAGERVLGGGWITRDIR</sequence>
<accession>A8GMY3</accession>
<dbReference type="EC" id="2.8.1.13" evidence="1"/>
<dbReference type="EMBL" id="CP000847">
    <property type="protein sequence ID" value="ABV74758.1"/>
    <property type="molecule type" value="Genomic_DNA"/>
</dbReference>
<dbReference type="RefSeq" id="WP_012149392.1">
    <property type="nucleotide sequence ID" value="NC_009881.1"/>
</dbReference>
<dbReference type="SMR" id="A8GMY3"/>
<dbReference type="STRING" id="293614.A1C_02285"/>
<dbReference type="KEGG" id="rak:A1C_02285"/>
<dbReference type="eggNOG" id="COG0482">
    <property type="taxonomic scope" value="Bacteria"/>
</dbReference>
<dbReference type="HOGENOM" id="CLU_035188_0_1_5"/>
<dbReference type="Proteomes" id="UP000006830">
    <property type="component" value="Chromosome"/>
</dbReference>
<dbReference type="GO" id="GO:0005737">
    <property type="term" value="C:cytoplasm"/>
    <property type="evidence" value="ECO:0007669"/>
    <property type="project" value="UniProtKB-SubCell"/>
</dbReference>
<dbReference type="GO" id="GO:0005524">
    <property type="term" value="F:ATP binding"/>
    <property type="evidence" value="ECO:0007669"/>
    <property type="project" value="UniProtKB-KW"/>
</dbReference>
<dbReference type="GO" id="GO:0000049">
    <property type="term" value="F:tRNA binding"/>
    <property type="evidence" value="ECO:0007669"/>
    <property type="project" value="UniProtKB-KW"/>
</dbReference>
<dbReference type="GO" id="GO:0103016">
    <property type="term" value="F:tRNA-uridine 2-sulfurtransferase activity"/>
    <property type="evidence" value="ECO:0007669"/>
    <property type="project" value="UniProtKB-EC"/>
</dbReference>
<dbReference type="GO" id="GO:0002143">
    <property type="term" value="P:tRNA wobble position uridine thiolation"/>
    <property type="evidence" value="ECO:0007669"/>
    <property type="project" value="TreeGrafter"/>
</dbReference>
<dbReference type="CDD" id="cd01998">
    <property type="entry name" value="MnmA_TRMU-like"/>
    <property type="match status" value="1"/>
</dbReference>
<dbReference type="FunFam" id="2.30.30.280:FF:000001">
    <property type="entry name" value="tRNA-specific 2-thiouridylase MnmA"/>
    <property type="match status" value="1"/>
</dbReference>
<dbReference type="FunFam" id="2.40.30.10:FF:000127">
    <property type="entry name" value="tRNA-specific 2-thiouridylase MnmA"/>
    <property type="match status" value="1"/>
</dbReference>
<dbReference type="FunFam" id="3.40.50.620:FF:000115">
    <property type="entry name" value="tRNA-specific 2-thiouridylase MnmA"/>
    <property type="match status" value="1"/>
</dbReference>
<dbReference type="Gene3D" id="2.30.30.280">
    <property type="entry name" value="Adenine nucleotide alpha hydrolases-like domains"/>
    <property type="match status" value="1"/>
</dbReference>
<dbReference type="Gene3D" id="3.40.50.620">
    <property type="entry name" value="HUPs"/>
    <property type="match status" value="1"/>
</dbReference>
<dbReference type="Gene3D" id="2.40.30.10">
    <property type="entry name" value="Translation factors"/>
    <property type="match status" value="1"/>
</dbReference>
<dbReference type="HAMAP" id="MF_00144">
    <property type="entry name" value="tRNA_thiouridyl_MnmA"/>
    <property type="match status" value="1"/>
</dbReference>
<dbReference type="InterPro" id="IPR004506">
    <property type="entry name" value="MnmA-like"/>
</dbReference>
<dbReference type="InterPro" id="IPR046885">
    <property type="entry name" value="MnmA-like_C"/>
</dbReference>
<dbReference type="InterPro" id="IPR046884">
    <property type="entry name" value="MnmA-like_central"/>
</dbReference>
<dbReference type="InterPro" id="IPR023382">
    <property type="entry name" value="MnmA-like_central_sf"/>
</dbReference>
<dbReference type="InterPro" id="IPR014729">
    <property type="entry name" value="Rossmann-like_a/b/a_fold"/>
</dbReference>
<dbReference type="NCBIfam" id="NF001138">
    <property type="entry name" value="PRK00143.1"/>
    <property type="match status" value="1"/>
</dbReference>
<dbReference type="NCBIfam" id="TIGR00420">
    <property type="entry name" value="trmU"/>
    <property type="match status" value="1"/>
</dbReference>
<dbReference type="PANTHER" id="PTHR11933:SF5">
    <property type="entry name" value="MITOCHONDRIAL TRNA-SPECIFIC 2-THIOURIDYLASE 1"/>
    <property type="match status" value="1"/>
</dbReference>
<dbReference type="PANTHER" id="PTHR11933">
    <property type="entry name" value="TRNA 5-METHYLAMINOMETHYL-2-THIOURIDYLATE -METHYLTRANSFERASE"/>
    <property type="match status" value="1"/>
</dbReference>
<dbReference type="Pfam" id="PF03054">
    <property type="entry name" value="tRNA_Me_trans"/>
    <property type="match status" value="1"/>
</dbReference>
<dbReference type="Pfam" id="PF20258">
    <property type="entry name" value="tRNA_Me_trans_C"/>
    <property type="match status" value="1"/>
</dbReference>
<dbReference type="Pfam" id="PF20259">
    <property type="entry name" value="tRNA_Me_trans_M"/>
    <property type="match status" value="1"/>
</dbReference>
<dbReference type="SUPFAM" id="SSF52402">
    <property type="entry name" value="Adenine nucleotide alpha hydrolases-like"/>
    <property type="match status" value="1"/>
</dbReference>
<evidence type="ECO:0000255" key="1">
    <source>
        <dbReference type="HAMAP-Rule" id="MF_00144"/>
    </source>
</evidence>
<name>MNMA_RICAH</name>
<proteinExistence type="inferred from homology"/>
<reference key="1">
    <citation type="submission" date="2007-09" db="EMBL/GenBank/DDBJ databases">
        <title>Complete genome sequence of Rickettsia akari.</title>
        <authorList>
            <person name="Madan A."/>
            <person name="Fahey J."/>
            <person name="Helton E."/>
            <person name="Ketteman M."/>
            <person name="Madan A."/>
            <person name="Rodrigues S."/>
            <person name="Sanchez A."/>
            <person name="Whiting M."/>
            <person name="Dasch G."/>
            <person name="Eremeeva M."/>
        </authorList>
    </citation>
    <scope>NUCLEOTIDE SEQUENCE [LARGE SCALE GENOMIC DNA]</scope>
    <source>
        <strain>Hartford</strain>
    </source>
</reference>
<gene>
    <name evidence="1" type="primary">mnmA</name>
    <name type="synonym">trmU</name>
    <name type="ordered locus">A1C_02285</name>
</gene>
<protein>
    <recommendedName>
        <fullName evidence="1">tRNA-specific 2-thiouridylase MnmA</fullName>
        <ecNumber evidence="1">2.8.1.13</ecNumber>
    </recommendedName>
</protein>
<organism>
    <name type="scientific">Rickettsia akari (strain Hartford)</name>
    <dbReference type="NCBI Taxonomy" id="293614"/>
    <lineage>
        <taxon>Bacteria</taxon>
        <taxon>Pseudomonadati</taxon>
        <taxon>Pseudomonadota</taxon>
        <taxon>Alphaproteobacteria</taxon>
        <taxon>Rickettsiales</taxon>
        <taxon>Rickettsiaceae</taxon>
        <taxon>Rickettsieae</taxon>
        <taxon>Rickettsia</taxon>
        <taxon>spotted fever group</taxon>
    </lineage>
</organism>
<feature type="chain" id="PRO_1000009564" description="tRNA-specific 2-thiouridylase MnmA">
    <location>
        <begin position="1"/>
        <end position="365"/>
    </location>
</feature>
<feature type="region of interest" description="Interaction with tRNA" evidence="1">
    <location>
        <begin position="154"/>
        <end position="156"/>
    </location>
</feature>
<feature type="active site" description="Nucleophile" evidence="1">
    <location>
        <position position="108"/>
    </location>
</feature>
<feature type="active site" description="Cysteine persulfide intermediate" evidence="1">
    <location>
        <position position="204"/>
    </location>
</feature>
<feature type="binding site" evidence="1">
    <location>
        <begin position="14"/>
        <end position="21"/>
    </location>
    <ligand>
        <name>ATP</name>
        <dbReference type="ChEBI" id="CHEBI:30616"/>
    </ligand>
</feature>
<feature type="binding site" evidence="1">
    <location>
        <position position="40"/>
    </location>
    <ligand>
        <name>ATP</name>
        <dbReference type="ChEBI" id="CHEBI:30616"/>
    </ligand>
</feature>
<feature type="binding site" evidence="1">
    <location>
        <position position="132"/>
    </location>
    <ligand>
        <name>ATP</name>
        <dbReference type="ChEBI" id="CHEBI:30616"/>
    </ligand>
</feature>
<feature type="site" description="Interaction with tRNA" evidence="1">
    <location>
        <position position="133"/>
    </location>
</feature>
<feature type="site" description="Interaction with tRNA" evidence="1">
    <location>
        <position position="344"/>
    </location>
</feature>
<feature type="disulfide bond" description="Alternate" evidence="1">
    <location>
        <begin position="108"/>
        <end position="204"/>
    </location>
</feature>
<comment type="function">
    <text evidence="1">Catalyzes the 2-thiolation of uridine at the wobble position (U34) of tRNA, leading to the formation of s(2)U34.</text>
</comment>
<comment type="catalytic activity">
    <reaction evidence="1">
        <text>S-sulfanyl-L-cysteinyl-[protein] + uridine(34) in tRNA + AH2 + ATP = 2-thiouridine(34) in tRNA + L-cysteinyl-[protein] + A + AMP + diphosphate + H(+)</text>
        <dbReference type="Rhea" id="RHEA:47032"/>
        <dbReference type="Rhea" id="RHEA-COMP:10131"/>
        <dbReference type="Rhea" id="RHEA-COMP:11726"/>
        <dbReference type="Rhea" id="RHEA-COMP:11727"/>
        <dbReference type="Rhea" id="RHEA-COMP:11728"/>
        <dbReference type="ChEBI" id="CHEBI:13193"/>
        <dbReference type="ChEBI" id="CHEBI:15378"/>
        <dbReference type="ChEBI" id="CHEBI:17499"/>
        <dbReference type="ChEBI" id="CHEBI:29950"/>
        <dbReference type="ChEBI" id="CHEBI:30616"/>
        <dbReference type="ChEBI" id="CHEBI:33019"/>
        <dbReference type="ChEBI" id="CHEBI:61963"/>
        <dbReference type="ChEBI" id="CHEBI:65315"/>
        <dbReference type="ChEBI" id="CHEBI:87170"/>
        <dbReference type="ChEBI" id="CHEBI:456215"/>
        <dbReference type="EC" id="2.8.1.13"/>
    </reaction>
</comment>
<comment type="subcellular location">
    <subcellularLocation>
        <location evidence="1">Cytoplasm</location>
    </subcellularLocation>
</comment>
<comment type="similarity">
    <text evidence="1">Belongs to the MnmA/TRMU family.</text>
</comment>